<accession>P0CU31</accession>
<accession>Q2HEW2</accession>
<keyword id="KW-0325">Glycoprotein</keyword>
<keyword id="KW-0408">Iron</keyword>
<keyword id="KW-0472">Membrane</keyword>
<keyword id="KW-0479">Metal-binding</keyword>
<keyword id="KW-0503">Monooxygenase</keyword>
<keyword id="KW-0560">Oxidoreductase</keyword>
<keyword id="KW-1185">Reference proteome</keyword>
<keyword id="KW-0812">Transmembrane</keyword>
<keyword id="KW-1133">Transmembrane helix</keyword>
<sequence length="512" mass="57842">MTGFYFAAESSWSPYVILVLALAAMVANRLVRPKRPNDGLNHIPMLEFEDGDNSTERYIRDTWALLHAGYLKYTKRGMPFQMRNPADPDHPQVVLPAKYLSELKSAPESRFSFRLYSEQAFLLNYSHAPKQTDRTTHMVRTEMNKNMGALLEATQEEIEVALASKLPNSTAWEPATPYMALAYTTSRAIARVLGGRELSGSEEWIGMNVGVTGMTHQAAQQIREQYPPHLRWMARWRHPGARAVIATRRRSAQIVDPIIQKRLAGAQDTKPGEPDGIQWMLAAQGSRRPSAQEVADEQLFVGIASVHTTSATSLSILYDLLDRPNVAEEIIGEINAVAARHRDVGGRWTKQALSELEKLDSFMAESFRFNPVGLVTMQRSAVVDYVFQDGLRLPKHTQILFPTCEFNRDGDVHPNPDVFDPWRFLKMRKAGDPNKHHFAYVSDQMVGFGGGTHACPGRYFASYEIKLILIHMLTRYDIKWPDGLTRPPNMVHDFSNVPNFTATVLFRNKSKS</sequence>
<organism>
    <name type="scientific">Chaetomium globosum (strain ATCC 6205 / CBS 148.51 / DSM 1962 / NBRC 6347 / NRRL 1970)</name>
    <name type="common">Soil fungus</name>
    <dbReference type="NCBI Taxonomy" id="306901"/>
    <lineage>
        <taxon>Eukaryota</taxon>
        <taxon>Fungi</taxon>
        <taxon>Dikarya</taxon>
        <taxon>Ascomycota</taxon>
        <taxon>Pezizomycotina</taxon>
        <taxon>Sordariomycetes</taxon>
        <taxon>Sordariomycetidae</taxon>
        <taxon>Sordariales</taxon>
        <taxon>Chaetomiaceae</taxon>
        <taxon>Chaetomium</taxon>
    </lineage>
</organism>
<protein>
    <recommendedName>
        <fullName evidence="6">Cytochrome P450 monooxygenase cheE</fullName>
        <ecNumber evidence="8">1.-.-.-</ecNumber>
    </recommendedName>
    <alternativeName>
        <fullName evidence="6">Chaetoglobosin A biosynthesis cluster protein E</fullName>
    </alternativeName>
</protein>
<name>CHEE_CHAGB</name>
<dbReference type="EC" id="1.-.-.-" evidence="8"/>
<dbReference type="EMBL" id="CH408029">
    <property type="protein sequence ID" value="EAQ93007.1"/>
    <property type="status" value="ALT_SEQ"/>
    <property type="molecule type" value="Genomic_DNA"/>
</dbReference>
<dbReference type="SMR" id="P0CU31"/>
<dbReference type="STRING" id="306901.P0CU31"/>
<dbReference type="GlyCosmos" id="P0CU31">
    <property type="glycosylation" value="5 sites, No reported glycans"/>
</dbReference>
<dbReference type="VEuPathDB" id="FungiDB:CHGG_01242"/>
<dbReference type="InParanoid" id="P0CU31"/>
<dbReference type="Proteomes" id="UP000001056">
    <property type="component" value="Unassembled WGS sequence"/>
</dbReference>
<dbReference type="GO" id="GO:0005737">
    <property type="term" value="C:cytoplasm"/>
    <property type="evidence" value="ECO:0007669"/>
    <property type="project" value="InterPro"/>
</dbReference>
<dbReference type="GO" id="GO:0008290">
    <property type="term" value="C:F-actin capping protein complex"/>
    <property type="evidence" value="ECO:0007669"/>
    <property type="project" value="InterPro"/>
</dbReference>
<dbReference type="GO" id="GO:0016020">
    <property type="term" value="C:membrane"/>
    <property type="evidence" value="ECO:0007669"/>
    <property type="project" value="UniProtKB-SubCell"/>
</dbReference>
<dbReference type="GO" id="GO:0003779">
    <property type="term" value="F:actin binding"/>
    <property type="evidence" value="ECO:0007669"/>
    <property type="project" value="InterPro"/>
</dbReference>
<dbReference type="GO" id="GO:0020037">
    <property type="term" value="F:heme binding"/>
    <property type="evidence" value="ECO:0007669"/>
    <property type="project" value="InterPro"/>
</dbReference>
<dbReference type="GO" id="GO:0005506">
    <property type="term" value="F:iron ion binding"/>
    <property type="evidence" value="ECO:0007669"/>
    <property type="project" value="InterPro"/>
</dbReference>
<dbReference type="GO" id="GO:0004497">
    <property type="term" value="F:monooxygenase activity"/>
    <property type="evidence" value="ECO:0007669"/>
    <property type="project" value="UniProtKB-KW"/>
</dbReference>
<dbReference type="GO" id="GO:0016705">
    <property type="term" value="F:oxidoreductase activity, acting on paired donors, with incorporation or reduction of molecular oxygen"/>
    <property type="evidence" value="ECO:0007669"/>
    <property type="project" value="InterPro"/>
</dbReference>
<dbReference type="GO" id="GO:0030036">
    <property type="term" value="P:actin cytoskeleton organization"/>
    <property type="evidence" value="ECO:0007669"/>
    <property type="project" value="InterPro"/>
</dbReference>
<dbReference type="GO" id="GO:0019748">
    <property type="term" value="P:secondary metabolic process"/>
    <property type="evidence" value="ECO:0007669"/>
    <property type="project" value="UniProtKB-ARBA"/>
</dbReference>
<dbReference type="CDD" id="cd11041">
    <property type="entry name" value="CYP503A1-like"/>
    <property type="match status" value="1"/>
</dbReference>
<dbReference type="Gene3D" id="1.10.630.10">
    <property type="entry name" value="Cytochrome P450"/>
    <property type="match status" value="1"/>
</dbReference>
<dbReference type="InterPro" id="IPR001128">
    <property type="entry name" value="Cyt_P450"/>
</dbReference>
<dbReference type="InterPro" id="IPR017972">
    <property type="entry name" value="Cyt_P450_CS"/>
</dbReference>
<dbReference type="InterPro" id="IPR002403">
    <property type="entry name" value="Cyt_P450_E_grp-IV"/>
</dbReference>
<dbReference type="InterPro" id="IPR036396">
    <property type="entry name" value="Cyt_P450_sf"/>
</dbReference>
<dbReference type="InterPro" id="IPR019771">
    <property type="entry name" value="F-actin_capping_bsu_CS"/>
</dbReference>
<dbReference type="PANTHER" id="PTHR46206">
    <property type="entry name" value="CYTOCHROME P450"/>
    <property type="match status" value="1"/>
</dbReference>
<dbReference type="PANTHER" id="PTHR46206:SF7">
    <property type="entry name" value="P450, PUTATIVE (EUROFUNG)-RELATED"/>
    <property type="match status" value="1"/>
</dbReference>
<dbReference type="Pfam" id="PF00067">
    <property type="entry name" value="p450"/>
    <property type="match status" value="1"/>
</dbReference>
<dbReference type="PRINTS" id="PR00465">
    <property type="entry name" value="EP450IV"/>
</dbReference>
<dbReference type="SUPFAM" id="SSF48264">
    <property type="entry name" value="Cytochrome P450"/>
    <property type="match status" value="1"/>
</dbReference>
<dbReference type="PROSITE" id="PS00086">
    <property type="entry name" value="CYTOCHROME_P450"/>
    <property type="match status" value="1"/>
</dbReference>
<dbReference type="PROSITE" id="PS00231">
    <property type="entry name" value="F_ACTIN_CAPPING_BETA"/>
    <property type="match status" value="1"/>
</dbReference>
<comment type="function">
    <text evidence="4 5 9">Cytochrome P450 monooxygenase; part of the gene cluster that mediates the biosynthesis of chaetoglobosin A which has a unique inhibitory activity against actin polymerization in mammalian cells (PubMed:23611317, PubMed:33622536). Chaetoglobosin A and its intermediates are involved in the morphological differentiation of C.globosum (PubMed:33622536). The first step of the pathway is the synthesis of prochaetoglobosin I via condensation of one acetyl-CoA, 8 malonyl-CoA, and a L-tryptophan molecule by the PKS-NRPS hybrid synthetase cheA, followed by reduction of backbone double bond to install desired geometry by the enoyl reductase cheB (PubMed:23611317). Further multiple oxidation steps performed by the cytochrome P450 monooxygenases cheE and cheG, as well as by the FAD-linked oxidoreductase cheF, lead to the formation of chaetoglobosin A (PubMed:23611317). Depending on the order of action of these reductases, distinct intermediates can be identified (PubMed:23611317). Within the pathway, the cytochrome P450 monooxygenase cheE catalyzes a stereospecific epoxidation on prochaetoglobosin I, cytoglobosin D, and chaetoglobosin J intermediates (PubMed:23611317). The FAD-linked oxidoreductase cheF performs dehydrogenation of the C-20 hydroxyl groups in the 20-dihyrochaetoglobosin A and cytoglobosin D intermediates (PubMed:23611317). Finally, the cytochrome P450 monooxygenase cheG can catalyze the stereospecific dihydroxylation of prochaetoglobosin I and prochaetoglobosin IV at C-19 and C-20, respectively (PubMed:23611317). The Diels-Alderase cheD may play a role in the post-PKS-NRPS biosynthetic steps catalyzing Diels-Alder cyclization (Probable).</text>
</comment>
<comment type="cofactor">
    <cofactor evidence="1">
        <name>heme</name>
        <dbReference type="ChEBI" id="CHEBI:30413"/>
    </cofactor>
</comment>
<comment type="pathway">
    <text evidence="4">Secondary metabolite biosynthesis.</text>
</comment>
<comment type="subcellular location">
    <subcellularLocation>
        <location evidence="2">Membrane</location>
        <topology evidence="2">Single-pass membrane protein</topology>
    </subcellularLocation>
</comment>
<comment type="induction">
    <text evidence="5">Expression is positively regulated by the cluster-specific transcription factor cheR that binds directly to an asymmetric direct repeat present in the promoter.</text>
</comment>
<comment type="disruption phenotype">
    <text evidence="4">Impairs the production of chaetoglobosin A but leads to the accumulation of cytoglobosin D and chaetoglobosin J (PubMed:23611317).</text>
</comment>
<comment type="similarity">
    <text evidence="7">Belongs to the cytochrome P450 family.</text>
</comment>
<comment type="sequence caution" evidence="4">
    <conflict type="erroneous gene model prediction">
        <sequence resource="EMBL-CDS" id="EAQ93007"/>
    </conflict>
    <text>The predicted gene CHGG_01242 has been split into 2 genes: CHGG_01242-1 and CHGG_01242-2.</text>
</comment>
<feature type="chain" id="PRO_0000438243" description="Cytochrome P450 monooxygenase cheE" evidence="2">
    <location>
        <begin position="1"/>
        <end position="512"/>
    </location>
</feature>
<feature type="transmembrane region" description="Helical" evidence="2">
    <location>
        <begin position="5"/>
        <end position="27"/>
    </location>
</feature>
<feature type="binding site" description="axial binding residue" evidence="1">
    <location>
        <position position="455"/>
    </location>
    <ligand>
        <name>heme</name>
        <dbReference type="ChEBI" id="CHEBI:30413"/>
    </ligand>
    <ligandPart>
        <name>Fe</name>
        <dbReference type="ChEBI" id="CHEBI:18248"/>
    </ligandPart>
</feature>
<feature type="glycosylation site" description="N-linked (GlcNAc...) asparagine" evidence="3">
    <location>
        <position position="53"/>
    </location>
</feature>
<feature type="glycosylation site" description="N-linked (GlcNAc...) asparagine" evidence="3">
    <location>
        <position position="124"/>
    </location>
</feature>
<feature type="glycosylation site" description="N-linked (GlcNAc...) asparagine" evidence="3">
    <location>
        <position position="168"/>
    </location>
</feature>
<feature type="glycosylation site" description="N-linked (GlcNAc...) asparagine" evidence="3">
    <location>
        <position position="499"/>
    </location>
</feature>
<feature type="glycosylation site" description="N-linked (GlcNAc...) asparagine" evidence="3">
    <location>
        <position position="508"/>
    </location>
</feature>
<proteinExistence type="evidence at transcript level"/>
<reference key="1">
    <citation type="journal article" date="2015" name="Genome Announc.">
        <title>Draft genome sequence of the cellulolytic fungus Chaetomium globosum.</title>
        <authorList>
            <person name="Cuomo C.A."/>
            <person name="Untereiner W.A."/>
            <person name="Ma L.-J."/>
            <person name="Grabherr M."/>
            <person name="Birren B.W."/>
        </authorList>
    </citation>
    <scope>NUCLEOTIDE SEQUENCE [LARGE SCALE GENOMIC DNA]</scope>
    <source>
        <strain>ATCC 6205 / CBS 148.51 / DSM 1962 / NBRC 6347 / NRRL 1970</strain>
    </source>
</reference>
<reference key="2">
    <citation type="journal article" date="2013" name="J. Am. Chem. Soc.">
        <title>Combinatorial generation of complexity by redox enzymes in the chaetoglobosin A biosynthesis.</title>
        <authorList>
            <person name="Ishiuchi K."/>
            <person name="Nakazawa T."/>
            <person name="Yagishita F."/>
            <person name="Mino T."/>
            <person name="Noguchi H."/>
            <person name="Hotta K."/>
            <person name="Watanabe K."/>
        </authorList>
    </citation>
    <scope>FUNCTION</scope>
    <scope>DISRUPTION PHENOTYPE</scope>
    <scope>PATHWAY</scope>
</reference>
<reference key="3">
    <citation type="journal article" date="2021" name="Fungal Biol.">
        <title>Functional analysis of a chaetoglobosin A biosynthetic regulator in Chaetomium globosum.</title>
        <authorList>
            <person name="Cheng M."/>
            <person name="Zhao S."/>
            <person name="Liu H."/>
            <person name="Liu Y."/>
            <person name="Lin C."/>
            <person name="Song J."/>
            <person name="Thawai C."/>
            <person name="Charoensettasilp S."/>
            <person name="Yang Q."/>
        </authorList>
    </citation>
    <scope>FUNCTION</scope>
    <scope>INDUCTION</scope>
</reference>
<evidence type="ECO:0000250" key="1">
    <source>
        <dbReference type="UniProtKB" id="P04798"/>
    </source>
</evidence>
<evidence type="ECO:0000255" key="2"/>
<evidence type="ECO:0000255" key="3">
    <source>
        <dbReference type="PROSITE-ProRule" id="PRU00498"/>
    </source>
</evidence>
<evidence type="ECO:0000269" key="4">
    <source>
    </source>
</evidence>
<evidence type="ECO:0000269" key="5">
    <source>
    </source>
</evidence>
<evidence type="ECO:0000303" key="6">
    <source>
    </source>
</evidence>
<evidence type="ECO:0000305" key="7"/>
<evidence type="ECO:0000305" key="8">
    <source>
    </source>
</evidence>
<evidence type="ECO:0000305" key="9">
    <source>
    </source>
</evidence>
<gene>
    <name evidence="6" type="primary">cheE</name>
    <name type="ORF">CHGG_01242-1</name>
</gene>